<proteinExistence type="inferred from homology"/>
<sequence length="136" mass="15922">MNTNDAIKILKENGLKYTDKRKDMLDIFVEEDKYINAKYIQQVMDENYPGISFDTIYRNLHLFKDLGIIENTELDGEMKFRIACTNHHHHHFICEKCGDTKVIDYCPIDQIKLSLPGVNIHKHKLEVYGVCESCQD</sequence>
<keyword id="KW-0963">Cytoplasm</keyword>
<keyword id="KW-0238">DNA-binding</keyword>
<keyword id="KW-0408">Iron</keyword>
<keyword id="KW-0479">Metal-binding</keyword>
<keyword id="KW-0678">Repressor</keyword>
<keyword id="KW-0804">Transcription</keyword>
<keyword id="KW-0805">Transcription regulation</keyword>
<keyword id="KW-0862">Zinc</keyword>
<evidence type="ECO:0000250" key="1"/>
<evidence type="ECO:0000305" key="2"/>
<comment type="function">
    <text evidence="1">Acts as a global negative controlling element, employing Fe(2+) as a cofactor to bind the operator of the repressed genes.</text>
</comment>
<comment type="subunit">
    <text evidence="1">Homodimer.</text>
</comment>
<comment type="subcellular location">
    <subcellularLocation>
        <location evidence="1">Cytoplasm</location>
    </subcellularLocation>
</comment>
<comment type="similarity">
    <text evidence="2">Belongs to the Fur family.</text>
</comment>
<name>FUR_STAAU</name>
<feature type="chain" id="PRO_0000095578" description="Ferric uptake regulation protein">
    <location>
        <begin position="1"/>
        <end position="136"/>
    </location>
</feature>
<feature type="region of interest" description="DNA-binding" evidence="1">
    <location>
        <begin position="1"/>
        <end position="85"/>
    </location>
</feature>
<feature type="region of interest" description="Dimerization" evidence="1">
    <location>
        <begin position="86"/>
        <end position="136"/>
    </location>
</feature>
<feature type="binding site" evidence="1">
    <location>
        <position position="88"/>
    </location>
    <ligand>
        <name>Fe cation</name>
        <dbReference type="ChEBI" id="CHEBI:24875"/>
    </ligand>
</feature>
<feature type="binding site" evidence="1">
    <location>
        <position position="90"/>
    </location>
    <ligand>
        <name>Fe cation</name>
        <dbReference type="ChEBI" id="CHEBI:24875"/>
    </ligand>
</feature>
<feature type="binding site" evidence="1">
    <location>
        <position position="94"/>
    </location>
    <ligand>
        <name>Zn(2+)</name>
        <dbReference type="ChEBI" id="CHEBI:29105"/>
    </ligand>
</feature>
<feature type="binding site" evidence="1">
    <location>
        <position position="97"/>
    </location>
    <ligand>
        <name>Zn(2+)</name>
        <dbReference type="ChEBI" id="CHEBI:29105"/>
    </ligand>
</feature>
<feature type="binding site" evidence="1">
    <location>
        <position position="109"/>
    </location>
    <ligand>
        <name>Fe cation</name>
        <dbReference type="ChEBI" id="CHEBI:24875"/>
    </ligand>
</feature>
<feature type="binding site" evidence="1">
    <location>
        <position position="123"/>
    </location>
    <ligand>
        <name>Fe cation</name>
        <dbReference type="ChEBI" id="CHEBI:24875"/>
    </ligand>
</feature>
<gene>
    <name type="primary">fur</name>
    <name type="synonym">furA</name>
    <name type="synonym">mreR</name>
</gene>
<reference key="1">
    <citation type="submission" date="1998-09" db="EMBL/GenBank/DDBJ databases">
        <title>Three fur homologs of Staphylococcus aureus.</title>
        <authorList>
            <person name="Choi G.H."/>
            <person name="Tran M."/>
        </authorList>
    </citation>
    <scope>NUCLEOTIDE SEQUENCE [GENOMIC DNA]</scope>
    <source>
        <strain>ISP3</strain>
    </source>
</reference>
<accession>P0C1Q1</accession>
<accession>P0A035</accession>
<accession>Q9R3G5</accession>
<dbReference type="EMBL" id="AF095595">
    <property type="protein sequence ID" value="AAF00078.1"/>
    <property type="molecule type" value="Genomic_DNA"/>
</dbReference>
<dbReference type="RefSeq" id="WP_001095260.1">
    <property type="nucleotide sequence ID" value="NZ_WYDB01000002.1"/>
</dbReference>
<dbReference type="SMR" id="P0C1Q1"/>
<dbReference type="OMA" id="DMKHFAI"/>
<dbReference type="GO" id="GO:0005737">
    <property type="term" value="C:cytoplasm"/>
    <property type="evidence" value="ECO:0007669"/>
    <property type="project" value="UniProtKB-SubCell"/>
</dbReference>
<dbReference type="GO" id="GO:0003700">
    <property type="term" value="F:DNA-binding transcription factor activity"/>
    <property type="evidence" value="ECO:0007669"/>
    <property type="project" value="InterPro"/>
</dbReference>
<dbReference type="GO" id="GO:0000976">
    <property type="term" value="F:transcription cis-regulatory region binding"/>
    <property type="evidence" value="ECO:0007669"/>
    <property type="project" value="TreeGrafter"/>
</dbReference>
<dbReference type="GO" id="GO:0008270">
    <property type="term" value="F:zinc ion binding"/>
    <property type="evidence" value="ECO:0007669"/>
    <property type="project" value="TreeGrafter"/>
</dbReference>
<dbReference type="GO" id="GO:0045892">
    <property type="term" value="P:negative regulation of DNA-templated transcription"/>
    <property type="evidence" value="ECO:0007669"/>
    <property type="project" value="TreeGrafter"/>
</dbReference>
<dbReference type="GO" id="GO:1900376">
    <property type="term" value="P:regulation of secondary metabolite biosynthetic process"/>
    <property type="evidence" value="ECO:0007669"/>
    <property type="project" value="TreeGrafter"/>
</dbReference>
<dbReference type="CDD" id="cd07153">
    <property type="entry name" value="Fur_like"/>
    <property type="match status" value="1"/>
</dbReference>
<dbReference type="Gene3D" id="3.30.1490.190">
    <property type="match status" value="1"/>
</dbReference>
<dbReference type="Gene3D" id="1.10.10.10">
    <property type="entry name" value="Winged helix-like DNA-binding domain superfamily/Winged helix DNA-binding domain"/>
    <property type="match status" value="1"/>
</dbReference>
<dbReference type="InterPro" id="IPR002481">
    <property type="entry name" value="FUR"/>
</dbReference>
<dbReference type="InterPro" id="IPR043135">
    <property type="entry name" value="Fur_C"/>
</dbReference>
<dbReference type="InterPro" id="IPR036388">
    <property type="entry name" value="WH-like_DNA-bd_sf"/>
</dbReference>
<dbReference type="InterPro" id="IPR036390">
    <property type="entry name" value="WH_DNA-bd_sf"/>
</dbReference>
<dbReference type="PANTHER" id="PTHR33202:SF1">
    <property type="entry name" value="FERRIC UPTAKE REGULATION PROTEIN"/>
    <property type="match status" value="1"/>
</dbReference>
<dbReference type="PANTHER" id="PTHR33202">
    <property type="entry name" value="ZINC UPTAKE REGULATION PROTEIN"/>
    <property type="match status" value="1"/>
</dbReference>
<dbReference type="Pfam" id="PF01475">
    <property type="entry name" value="FUR"/>
    <property type="match status" value="1"/>
</dbReference>
<dbReference type="SUPFAM" id="SSF46785">
    <property type="entry name" value="Winged helix' DNA-binding domain"/>
    <property type="match status" value="1"/>
</dbReference>
<organism>
    <name type="scientific">Staphylococcus aureus</name>
    <dbReference type="NCBI Taxonomy" id="1280"/>
    <lineage>
        <taxon>Bacteria</taxon>
        <taxon>Bacillati</taxon>
        <taxon>Bacillota</taxon>
        <taxon>Bacilli</taxon>
        <taxon>Bacillales</taxon>
        <taxon>Staphylococcaceae</taxon>
        <taxon>Staphylococcus</taxon>
    </lineage>
</organism>
<protein>
    <recommendedName>
        <fullName>Ferric uptake regulation protein</fullName>
        <shortName>Ferric uptake regulator</shortName>
    </recommendedName>
</protein>